<gene>
    <name evidence="7" type="primary">GATA20</name>
    <name evidence="8" type="synonym">TIFY2B</name>
    <name evidence="11" type="ordered locus">Os06g0698900</name>
    <name type="ordered locus">LOC_Os06g48534</name>
    <name evidence="10" type="ORF">P0468G03.1</name>
    <name evidence="10" type="ORF">P0545E05.36</name>
</gene>
<accession>Q5Z4U5</accession>
<accession>Q0D9U1</accession>
<keyword id="KW-0010">Activator</keyword>
<keyword id="KW-0238">DNA-binding</keyword>
<keyword id="KW-0479">Metal-binding</keyword>
<keyword id="KW-0539">Nucleus</keyword>
<keyword id="KW-1185">Reference proteome</keyword>
<keyword id="KW-0804">Transcription</keyword>
<keyword id="KW-0805">Transcription regulation</keyword>
<keyword id="KW-0862">Zinc</keyword>
<keyword id="KW-0863">Zinc-finger</keyword>
<name>GAT20_ORYSJ</name>
<comment type="function">
    <text evidence="1">Transcriptional activator that specifically binds 5'-GATA-3' or 5'-GAT-3' motifs within gene promoters.</text>
</comment>
<comment type="subcellular location">
    <subcellularLocation>
        <location evidence="3">Nucleus</location>
    </subcellularLocation>
</comment>
<comment type="induction">
    <text evidence="6">By abscisic acid (ABA), and drought and salt stresses. Down-regulated by jasmonate and wounding.</text>
</comment>
<comment type="similarity">
    <text evidence="9">Belongs to the type IV zinc-finger family. Class C subfamily.</text>
</comment>
<comment type="sequence caution" evidence="9">
    <conflict type="erroneous gene model prediction">
        <sequence resource="EMBL-CDS" id="BAF20382"/>
    </conflict>
</comment>
<protein>
    <recommendedName>
        <fullName evidence="7">GATA transcription factor 20</fullName>
        <shortName evidence="7">OsGATA20</shortName>
    </recommendedName>
    <alternativeName>
        <fullName evidence="9">Protein TIFY 2b</fullName>
        <shortName evidence="8">OsTIFY2b</shortName>
    </alternativeName>
</protein>
<dbReference type="EMBL" id="AP004278">
    <property type="protein sequence ID" value="BAD53990.1"/>
    <property type="molecule type" value="Genomic_DNA"/>
</dbReference>
<dbReference type="EMBL" id="AP005931">
    <property type="protein sequence ID" value="BAD54672.1"/>
    <property type="molecule type" value="Genomic_DNA"/>
</dbReference>
<dbReference type="EMBL" id="AP008212">
    <property type="protein sequence ID" value="BAF20382.2"/>
    <property type="status" value="ALT_SEQ"/>
    <property type="molecule type" value="Genomic_DNA"/>
</dbReference>
<dbReference type="EMBL" id="AP014962">
    <property type="status" value="NOT_ANNOTATED_CDS"/>
    <property type="molecule type" value="Genomic_DNA"/>
</dbReference>
<dbReference type="EMBL" id="AK243334">
    <property type="status" value="NOT_ANNOTATED_CDS"/>
    <property type="molecule type" value="mRNA"/>
</dbReference>
<dbReference type="RefSeq" id="XP_015641381.1">
    <property type="nucleotide sequence ID" value="XM_015785895.1"/>
</dbReference>
<dbReference type="SMR" id="Q5Z4U5"/>
<dbReference type="FunCoup" id="Q5Z4U5">
    <property type="interactions" value="1722"/>
</dbReference>
<dbReference type="STRING" id="39947.Q5Z4U5"/>
<dbReference type="PaxDb" id="39947-Q5Z4U5"/>
<dbReference type="KEGG" id="dosa:Os06g0698900"/>
<dbReference type="eggNOG" id="KOG1601">
    <property type="taxonomic scope" value="Eukaryota"/>
</dbReference>
<dbReference type="HOGENOM" id="CLU_057264_0_0_1"/>
<dbReference type="InParanoid" id="Q5Z4U5"/>
<dbReference type="OrthoDB" id="2162994at2759"/>
<dbReference type="Proteomes" id="UP000000763">
    <property type="component" value="Chromosome 6"/>
</dbReference>
<dbReference type="Proteomes" id="UP000059680">
    <property type="component" value="Chromosome 6"/>
</dbReference>
<dbReference type="GO" id="GO:0005634">
    <property type="term" value="C:nucleus"/>
    <property type="evidence" value="ECO:0007669"/>
    <property type="project" value="UniProtKB-SubCell"/>
</dbReference>
<dbReference type="GO" id="GO:0043565">
    <property type="term" value="F:sequence-specific DNA binding"/>
    <property type="evidence" value="ECO:0007669"/>
    <property type="project" value="InterPro"/>
</dbReference>
<dbReference type="GO" id="GO:0008270">
    <property type="term" value="F:zinc ion binding"/>
    <property type="evidence" value="ECO:0007669"/>
    <property type="project" value="UniProtKB-KW"/>
</dbReference>
<dbReference type="GO" id="GO:0006355">
    <property type="term" value="P:regulation of DNA-templated transcription"/>
    <property type="evidence" value="ECO:0007669"/>
    <property type="project" value="InterPro"/>
</dbReference>
<dbReference type="CDD" id="cd00202">
    <property type="entry name" value="ZnF_GATA"/>
    <property type="match status" value="1"/>
</dbReference>
<dbReference type="Gene3D" id="3.30.50.10">
    <property type="entry name" value="Erythroid Transcription Factor GATA-1, subunit A"/>
    <property type="match status" value="1"/>
</dbReference>
<dbReference type="InterPro" id="IPR010402">
    <property type="entry name" value="CCT_domain"/>
</dbReference>
<dbReference type="InterPro" id="IPR045280">
    <property type="entry name" value="TIFY-like"/>
</dbReference>
<dbReference type="InterPro" id="IPR010399">
    <property type="entry name" value="Tify_dom"/>
</dbReference>
<dbReference type="InterPro" id="IPR000679">
    <property type="entry name" value="Znf_GATA"/>
</dbReference>
<dbReference type="InterPro" id="IPR013088">
    <property type="entry name" value="Znf_NHR/GATA"/>
</dbReference>
<dbReference type="PANTHER" id="PTHR46125">
    <property type="entry name" value="GATA TRANSCRIPTION FACTOR 28"/>
    <property type="match status" value="1"/>
</dbReference>
<dbReference type="PANTHER" id="PTHR46125:SF27">
    <property type="entry name" value="GATA TRANSCRIPTION FACTOR 28"/>
    <property type="match status" value="1"/>
</dbReference>
<dbReference type="Pfam" id="PF06203">
    <property type="entry name" value="CCT"/>
    <property type="match status" value="1"/>
</dbReference>
<dbReference type="Pfam" id="PF00320">
    <property type="entry name" value="GATA"/>
    <property type="match status" value="1"/>
</dbReference>
<dbReference type="Pfam" id="PF06200">
    <property type="entry name" value="tify"/>
    <property type="match status" value="1"/>
</dbReference>
<dbReference type="SMART" id="SM00979">
    <property type="entry name" value="TIFY"/>
    <property type="match status" value="1"/>
</dbReference>
<dbReference type="SMART" id="SM00401">
    <property type="entry name" value="ZnF_GATA"/>
    <property type="match status" value="1"/>
</dbReference>
<dbReference type="SUPFAM" id="SSF57716">
    <property type="entry name" value="Glucocorticoid receptor-like (DNA-binding domain)"/>
    <property type="match status" value="1"/>
</dbReference>
<dbReference type="PROSITE" id="PS51017">
    <property type="entry name" value="CCT"/>
    <property type="match status" value="1"/>
</dbReference>
<dbReference type="PROSITE" id="PS00344">
    <property type="entry name" value="GATA_ZN_FINGER_1"/>
    <property type="match status" value="1"/>
</dbReference>
<dbReference type="PROSITE" id="PS50114">
    <property type="entry name" value="GATA_ZN_FINGER_2"/>
    <property type="match status" value="1"/>
</dbReference>
<dbReference type="PROSITE" id="PS51320">
    <property type="entry name" value="TIFY"/>
    <property type="match status" value="1"/>
</dbReference>
<feature type="chain" id="PRO_0000434838" description="GATA transcription factor 20">
    <location>
        <begin position="1"/>
        <end position="340"/>
    </location>
</feature>
<feature type="domain" description="Tify" evidence="4">
    <location>
        <begin position="121"/>
        <end position="156"/>
    </location>
</feature>
<feature type="domain" description="CCT" evidence="3">
    <location>
        <begin position="182"/>
        <end position="224"/>
    </location>
</feature>
<feature type="zinc finger region" description="GATA-type" evidence="2">
    <location>
        <begin position="257"/>
        <end position="284"/>
    </location>
</feature>
<feature type="region of interest" description="Disordered" evidence="5">
    <location>
        <begin position="1"/>
        <end position="88"/>
    </location>
</feature>
<feature type="region of interest" description="Disordered" evidence="5">
    <location>
        <begin position="215"/>
        <end position="253"/>
    </location>
</feature>
<feature type="region of interest" description="Disordered" evidence="5">
    <location>
        <begin position="313"/>
        <end position="340"/>
    </location>
</feature>
<feature type="compositionally biased region" description="Low complexity" evidence="5">
    <location>
        <begin position="25"/>
        <end position="47"/>
    </location>
</feature>
<feature type="compositionally biased region" description="Basic and acidic residues" evidence="5">
    <location>
        <begin position="48"/>
        <end position="60"/>
    </location>
</feature>
<feature type="compositionally biased region" description="Acidic residues" evidence="5">
    <location>
        <begin position="61"/>
        <end position="84"/>
    </location>
</feature>
<feature type="compositionally biased region" description="Polar residues" evidence="5">
    <location>
        <begin position="233"/>
        <end position="244"/>
    </location>
</feature>
<feature type="compositionally biased region" description="Polar residues" evidence="5">
    <location>
        <begin position="313"/>
        <end position="325"/>
    </location>
</feature>
<organism>
    <name type="scientific">Oryza sativa subsp. japonica</name>
    <name type="common">Rice</name>
    <dbReference type="NCBI Taxonomy" id="39947"/>
    <lineage>
        <taxon>Eukaryota</taxon>
        <taxon>Viridiplantae</taxon>
        <taxon>Streptophyta</taxon>
        <taxon>Embryophyta</taxon>
        <taxon>Tracheophyta</taxon>
        <taxon>Spermatophyta</taxon>
        <taxon>Magnoliopsida</taxon>
        <taxon>Liliopsida</taxon>
        <taxon>Poales</taxon>
        <taxon>Poaceae</taxon>
        <taxon>BOP clade</taxon>
        <taxon>Oryzoideae</taxon>
        <taxon>Oryzeae</taxon>
        <taxon>Oryzinae</taxon>
        <taxon>Oryza</taxon>
        <taxon>Oryza sativa</taxon>
    </lineage>
</organism>
<proteinExistence type="evidence at transcript level"/>
<sequence>MSHHDGSKPYQPRRGPERPPPPAPADDAAAHVAPTVDHLAAVAAEAEAMARFEEEHRALGAEEEYEEEEDELEEEEEEMEEDEDAQHHEGVGGEVAVPMDAEAAAQLDPHGGMLAASGAVQPMASNQLTLSFQGEVYVFDSVSPDKVQAVLLLLGGRELNPGLGSGASSSAPYSKRLNFPHRVASLMRFREKRKERNFDKKIRYSVRKEVALRMQRNRGQFTSSKPKGDEATSELTASDGSPNWGSVEGRPPSAAECHHCGINAKATPMMRRGPDGPRTLCNACGLMWANKGMLRDLSKAPPTPIQVVASVNDGNGSAAAPTTEQEIPAPATVNGHESST</sequence>
<evidence type="ECO:0000250" key="1">
    <source>
        <dbReference type="UniProtKB" id="Q8LAU9"/>
    </source>
</evidence>
<evidence type="ECO:0000255" key="2">
    <source>
        <dbReference type="PROSITE-ProRule" id="PRU00094"/>
    </source>
</evidence>
<evidence type="ECO:0000255" key="3">
    <source>
        <dbReference type="PROSITE-ProRule" id="PRU00357"/>
    </source>
</evidence>
<evidence type="ECO:0000255" key="4">
    <source>
        <dbReference type="PROSITE-ProRule" id="PRU00650"/>
    </source>
</evidence>
<evidence type="ECO:0000256" key="5">
    <source>
        <dbReference type="SAM" id="MobiDB-lite"/>
    </source>
</evidence>
<evidence type="ECO:0000269" key="6">
    <source>
    </source>
</evidence>
<evidence type="ECO:0000303" key="7">
    <source>
    </source>
</evidence>
<evidence type="ECO:0000303" key="8">
    <source>
    </source>
</evidence>
<evidence type="ECO:0000305" key="9"/>
<evidence type="ECO:0000312" key="10">
    <source>
        <dbReference type="EMBL" id="BAD54672.1"/>
    </source>
</evidence>
<evidence type="ECO:0000312" key="11">
    <source>
        <dbReference type="EMBL" id="BAF20382.2"/>
    </source>
</evidence>
<reference key="1">
    <citation type="journal article" date="2005" name="Nature">
        <title>The map-based sequence of the rice genome.</title>
        <authorList>
            <consortium name="International rice genome sequencing project (IRGSP)"/>
        </authorList>
    </citation>
    <scope>NUCLEOTIDE SEQUENCE [LARGE SCALE GENOMIC DNA]</scope>
    <source>
        <strain>cv. Nipponbare</strain>
    </source>
</reference>
<reference key="2">
    <citation type="journal article" date="2008" name="Nucleic Acids Res.">
        <title>The rice annotation project database (RAP-DB): 2008 update.</title>
        <authorList>
            <consortium name="The rice annotation project (RAP)"/>
        </authorList>
    </citation>
    <scope>GENOME REANNOTATION</scope>
    <source>
        <strain>cv. Nipponbare</strain>
    </source>
</reference>
<reference key="3">
    <citation type="journal article" date="2013" name="Rice">
        <title>Improvement of the Oryza sativa Nipponbare reference genome using next generation sequence and optical map data.</title>
        <authorList>
            <person name="Kawahara Y."/>
            <person name="de la Bastide M."/>
            <person name="Hamilton J.P."/>
            <person name="Kanamori H."/>
            <person name="McCombie W.R."/>
            <person name="Ouyang S."/>
            <person name="Schwartz D.C."/>
            <person name="Tanaka T."/>
            <person name="Wu J."/>
            <person name="Zhou S."/>
            <person name="Childs K.L."/>
            <person name="Davidson R.M."/>
            <person name="Lin H."/>
            <person name="Quesada-Ocampo L."/>
            <person name="Vaillancourt B."/>
            <person name="Sakai H."/>
            <person name="Lee S.S."/>
            <person name="Kim J."/>
            <person name="Numa H."/>
            <person name="Itoh T."/>
            <person name="Buell C.R."/>
            <person name="Matsumoto T."/>
        </authorList>
    </citation>
    <scope>GENOME REANNOTATION</scope>
    <source>
        <strain>cv. Nipponbare</strain>
    </source>
</reference>
<reference key="4">
    <citation type="submission" date="2006-10" db="EMBL/GenBank/DDBJ databases">
        <title>Oryza sativa full length cDNA.</title>
        <authorList>
            <consortium name="The rice full-length cDNA consortium"/>
        </authorList>
    </citation>
    <scope>NUCLEOTIDE SEQUENCE [LARGE SCALE MRNA] OF 27-340</scope>
    <source>
        <strain>cv. Nipponbare</strain>
    </source>
</reference>
<reference key="5">
    <citation type="journal article" date="2004" name="Plant Physiol.">
        <title>The GATA family of transcription factors in Arabidopsis and rice.</title>
        <authorList>
            <person name="Reyes J.C."/>
            <person name="Muro-Pastor M.I."/>
            <person name="Florencio F.J."/>
        </authorList>
    </citation>
    <scope>GENE FAMILY</scope>
    <scope>NOMENCLATURE</scope>
</reference>
<reference key="6">
    <citation type="journal article" date="2009" name="Plant Mol. Biol.">
        <title>Identification and expression profiling analysis of TIFY family genes involved in stress and phytohormone responses in rice.</title>
        <authorList>
            <person name="Ye H."/>
            <person name="Du H."/>
            <person name="Tang N."/>
            <person name="Li X."/>
            <person name="Xiong L."/>
        </authorList>
    </citation>
    <scope>GENE FAMILY</scope>
    <scope>NOMENCLATURE</scope>
    <scope>INDUCTION</scope>
</reference>